<proteinExistence type="evidence at transcript level"/>
<name>PIS2_ARATH</name>
<dbReference type="EC" id="2.7.8.11" evidence="2"/>
<dbReference type="EMBL" id="AL035540">
    <property type="protein sequence ID" value="CAB37513.1"/>
    <property type="molecule type" value="Genomic_DNA"/>
</dbReference>
<dbReference type="EMBL" id="AL161593">
    <property type="protein sequence ID" value="CAB80521.1"/>
    <property type="molecule type" value="Genomic_DNA"/>
</dbReference>
<dbReference type="EMBL" id="CP002687">
    <property type="protein sequence ID" value="AEE86948.1"/>
    <property type="molecule type" value="Genomic_DNA"/>
</dbReference>
<dbReference type="EMBL" id="CP002687">
    <property type="protein sequence ID" value="ANM66702.1"/>
    <property type="molecule type" value="Genomic_DNA"/>
</dbReference>
<dbReference type="EMBL" id="CP002687">
    <property type="protein sequence ID" value="ANM66703.1"/>
    <property type="molecule type" value="Genomic_DNA"/>
</dbReference>
<dbReference type="EMBL" id="BT002432">
    <property type="protein sequence ID" value="AAO00792.1"/>
    <property type="molecule type" value="mRNA"/>
</dbReference>
<dbReference type="EMBL" id="AY086801">
    <property type="protein sequence ID" value="AAM63850.1"/>
    <property type="molecule type" value="mRNA"/>
</dbReference>
<dbReference type="PIR" id="T05685">
    <property type="entry name" value="T05685"/>
</dbReference>
<dbReference type="RefSeq" id="NP_001328583.1">
    <molecule id="Q8GUK6-1"/>
    <property type="nucleotide sequence ID" value="NM_001342506.1"/>
</dbReference>
<dbReference type="RefSeq" id="NP_001328584.1">
    <molecule id="Q8GUK6-1"/>
    <property type="nucleotide sequence ID" value="NM_001342505.1"/>
</dbReference>
<dbReference type="RefSeq" id="NP_195569.1">
    <molecule id="Q8GUK6-1"/>
    <property type="nucleotide sequence ID" value="NM_120018.4"/>
</dbReference>
<dbReference type="SMR" id="Q8GUK6"/>
<dbReference type="FunCoup" id="Q8GUK6">
    <property type="interactions" value="4084"/>
</dbReference>
<dbReference type="STRING" id="3702.Q8GUK6"/>
<dbReference type="iPTMnet" id="Q8GUK6"/>
<dbReference type="PaxDb" id="3702-AT4G38570.1"/>
<dbReference type="ProteomicsDB" id="236759">
    <molecule id="Q8GUK6-1"/>
</dbReference>
<dbReference type="EnsemblPlants" id="AT4G38570.1">
    <molecule id="Q8GUK6-1"/>
    <property type="protein sequence ID" value="AT4G38570.1"/>
    <property type="gene ID" value="AT4G38570"/>
</dbReference>
<dbReference type="EnsemblPlants" id="AT4G38570.3">
    <molecule id="Q8GUK6-1"/>
    <property type="protein sequence ID" value="AT4G38570.3"/>
    <property type="gene ID" value="AT4G38570"/>
</dbReference>
<dbReference type="EnsemblPlants" id="AT4G38570.4">
    <molecule id="Q8GUK6-1"/>
    <property type="protein sequence ID" value="AT4G38570.4"/>
    <property type="gene ID" value="AT4G38570"/>
</dbReference>
<dbReference type="GeneID" id="830014"/>
<dbReference type="Gramene" id="AT4G38570.1">
    <molecule id="Q8GUK6-1"/>
    <property type="protein sequence ID" value="AT4G38570.1"/>
    <property type="gene ID" value="AT4G38570"/>
</dbReference>
<dbReference type="Gramene" id="AT4G38570.3">
    <molecule id="Q8GUK6-1"/>
    <property type="protein sequence ID" value="AT4G38570.3"/>
    <property type="gene ID" value="AT4G38570"/>
</dbReference>
<dbReference type="Gramene" id="AT4G38570.4">
    <molecule id="Q8GUK6-1"/>
    <property type="protein sequence ID" value="AT4G38570.4"/>
    <property type="gene ID" value="AT4G38570"/>
</dbReference>
<dbReference type="KEGG" id="ath:AT4G38570"/>
<dbReference type="Araport" id="AT4G38570"/>
<dbReference type="TAIR" id="AT4G38570">
    <property type="gene designation" value="PIS2"/>
</dbReference>
<dbReference type="eggNOG" id="KOG3240">
    <property type="taxonomic scope" value="Eukaryota"/>
</dbReference>
<dbReference type="InParanoid" id="Q8GUK6"/>
<dbReference type="OrthoDB" id="10251079at2759"/>
<dbReference type="PhylomeDB" id="Q8GUK6"/>
<dbReference type="BioCyc" id="ARA:AT4G38570-MONOMER"/>
<dbReference type="BRENDA" id="2.7.8.11">
    <property type="organism ID" value="399"/>
</dbReference>
<dbReference type="PRO" id="PR:Q8GUK6"/>
<dbReference type="Proteomes" id="UP000006548">
    <property type="component" value="Chromosome 4"/>
</dbReference>
<dbReference type="ExpressionAtlas" id="Q8GUK6">
    <property type="expression patterns" value="baseline and differential"/>
</dbReference>
<dbReference type="GO" id="GO:0005783">
    <property type="term" value="C:endoplasmic reticulum"/>
    <property type="evidence" value="ECO:0000314"/>
    <property type="project" value="TAIR"/>
</dbReference>
<dbReference type="GO" id="GO:0005794">
    <property type="term" value="C:Golgi apparatus"/>
    <property type="evidence" value="ECO:0000314"/>
    <property type="project" value="TAIR"/>
</dbReference>
<dbReference type="GO" id="GO:0016020">
    <property type="term" value="C:membrane"/>
    <property type="evidence" value="ECO:0007669"/>
    <property type="project" value="UniProtKB-SubCell"/>
</dbReference>
<dbReference type="GO" id="GO:0003881">
    <property type="term" value="F:CDP-diacylglycerol-inositol 3-phosphatidyltransferase activity"/>
    <property type="evidence" value="ECO:0007669"/>
    <property type="project" value="UniProtKB-EC"/>
</dbReference>
<dbReference type="GO" id="GO:0046872">
    <property type="term" value="F:metal ion binding"/>
    <property type="evidence" value="ECO:0007669"/>
    <property type="project" value="UniProtKB-KW"/>
</dbReference>
<dbReference type="GO" id="GO:0008654">
    <property type="term" value="P:phospholipid biosynthetic process"/>
    <property type="evidence" value="ECO:0007669"/>
    <property type="project" value="UniProtKB-KW"/>
</dbReference>
<dbReference type="FunFam" id="1.20.120.1760:FF:000003">
    <property type="entry name" value="CDP-diacylglycerol--inositol 3-phosphatidyltransferase"/>
    <property type="match status" value="1"/>
</dbReference>
<dbReference type="Gene3D" id="1.20.120.1760">
    <property type="match status" value="1"/>
</dbReference>
<dbReference type="InterPro" id="IPR000462">
    <property type="entry name" value="CDP-OH_P_trans"/>
</dbReference>
<dbReference type="InterPro" id="IPR043130">
    <property type="entry name" value="CDP-OH_PTrfase_TM_dom"/>
</dbReference>
<dbReference type="InterPro" id="IPR048254">
    <property type="entry name" value="CDP_ALCOHOL_P_TRANSF_CS"/>
</dbReference>
<dbReference type="InterPro" id="IPR014387">
    <property type="entry name" value="CDP_diag_ino_3_P_euk"/>
</dbReference>
<dbReference type="PANTHER" id="PTHR15362:SF4">
    <property type="entry name" value="CDP-DIACYLGLYCEROL--INOSITOL 3-PHOSPHATIDYLTRANSFERASE"/>
    <property type="match status" value="1"/>
</dbReference>
<dbReference type="PANTHER" id="PTHR15362">
    <property type="entry name" value="PHOSPHATIDYLINOSITOL SYNTHASE"/>
    <property type="match status" value="1"/>
</dbReference>
<dbReference type="Pfam" id="PF01066">
    <property type="entry name" value="CDP-OH_P_transf"/>
    <property type="match status" value="1"/>
</dbReference>
<dbReference type="PIRSF" id="PIRSF000848">
    <property type="entry name" value="CDP_diag_ino_3_P"/>
    <property type="match status" value="1"/>
</dbReference>
<dbReference type="PROSITE" id="PS00379">
    <property type="entry name" value="CDP_ALCOHOL_P_TRANSF"/>
    <property type="match status" value="1"/>
</dbReference>
<organism>
    <name type="scientific">Arabidopsis thaliana</name>
    <name type="common">Mouse-ear cress</name>
    <dbReference type="NCBI Taxonomy" id="3702"/>
    <lineage>
        <taxon>Eukaryota</taxon>
        <taxon>Viridiplantae</taxon>
        <taxon>Streptophyta</taxon>
        <taxon>Embryophyta</taxon>
        <taxon>Tracheophyta</taxon>
        <taxon>Spermatophyta</taxon>
        <taxon>Magnoliopsida</taxon>
        <taxon>eudicotyledons</taxon>
        <taxon>Gunneridae</taxon>
        <taxon>Pentapetalae</taxon>
        <taxon>rosids</taxon>
        <taxon>malvids</taxon>
        <taxon>Brassicales</taxon>
        <taxon>Brassicaceae</taxon>
        <taxon>Camelineae</taxon>
        <taxon>Arabidopsis</taxon>
    </lineage>
</organism>
<feature type="chain" id="PRO_0000056806" description="Probable CDP-diacylglycerol--inositol 3-phosphatidyltransferase 2">
    <location>
        <begin position="1"/>
        <end position="225"/>
    </location>
</feature>
<feature type="transmembrane region" description="Helical" evidence="3">
    <location>
        <begin position="6"/>
        <end position="26"/>
    </location>
</feature>
<feature type="transmembrane region" description="Helical" evidence="3">
    <location>
        <begin position="29"/>
        <end position="49"/>
    </location>
</feature>
<feature type="transmembrane region" description="Helical" evidence="3">
    <location>
        <begin position="84"/>
        <end position="104"/>
    </location>
</feature>
<feature type="transmembrane region" description="Helical" evidence="3">
    <location>
        <begin position="143"/>
        <end position="163"/>
    </location>
</feature>
<feature type="transmembrane region" description="Helical" evidence="3">
    <location>
        <begin position="184"/>
        <end position="204"/>
    </location>
</feature>
<feature type="active site" description="Proton acceptor" evidence="1">
    <location>
        <position position="77"/>
    </location>
</feature>
<feature type="binding site" evidence="1">
    <location>
        <position position="52"/>
    </location>
    <ligand>
        <name>Mg(2+)</name>
        <dbReference type="ChEBI" id="CHEBI:18420"/>
        <label>1</label>
    </ligand>
</feature>
<feature type="binding site" evidence="1">
    <location>
        <position position="52"/>
    </location>
    <ligand>
        <name>Mg(2+)</name>
        <dbReference type="ChEBI" id="CHEBI:18420"/>
        <label>2</label>
    </ligand>
</feature>
<feature type="binding site" evidence="1">
    <location>
        <position position="55"/>
    </location>
    <ligand>
        <name>Mg(2+)</name>
        <dbReference type="ChEBI" id="CHEBI:18420"/>
        <label>1</label>
    </ligand>
</feature>
<feature type="binding site" evidence="1">
    <location>
        <position position="56"/>
    </location>
    <ligand>
        <name>a CDP-1,2-diacyl-sn-glycerol</name>
        <dbReference type="ChEBI" id="CHEBI:58332"/>
    </ligand>
</feature>
<feature type="binding site" evidence="1">
    <location>
        <position position="60"/>
    </location>
    <ligand>
        <name>a CDP-1,2-diacyl-sn-glycerol</name>
        <dbReference type="ChEBI" id="CHEBI:58332"/>
    </ligand>
</feature>
<feature type="binding site" evidence="1">
    <location>
        <position position="66"/>
    </location>
    <ligand>
        <name>a CDP-1,2-diacyl-sn-glycerol</name>
        <dbReference type="ChEBI" id="CHEBI:58332"/>
    </ligand>
</feature>
<feature type="binding site" evidence="1">
    <location>
        <position position="73"/>
    </location>
    <ligand>
        <name>Mg(2+)</name>
        <dbReference type="ChEBI" id="CHEBI:18420"/>
        <label>1</label>
    </ligand>
</feature>
<feature type="binding site" evidence="1">
    <location>
        <position position="73"/>
    </location>
    <ligand>
        <name>Mg(2+)</name>
        <dbReference type="ChEBI" id="CHEBI:18420"/>
        <label>2</label>
    </ligand>
</feature>
<feature type="binding site" evidence="1">
    <location>
        <position position="77"/>
    </location>
    <ligand>
        <name>Mg(2+)</name>
        <dbReference type="ChEBI" id="CHEBI:18420"/>
        <label>2</label>
    </ligand>
</feature>
<feature type="sequence conflict" description="In Ref. 3; AAO00792." evidence="4" ref="3">
    <original>C</original>
    <variation>S</variation>
    <location>
        <position position="148"/>
    </location>
</feature>
<sequence length="225" mass="25580">MAKQRPATLSVYLYIPNIVGYMRVLLNCIAFSVCFSNKTLFSLLYFFSFCCDAVDGWCARKFNQVSTFGAVLDMVTDRVSTACLLVILSQIYRPSLVFLSLLALDIASHWLQMYSTFLSGKTSHKDVKDSTSWLFRLYYGNRMFMGYCCVSCEVLYIILLLIATNQTENLMNVVVKSLMQISPLSLLLALSIFGWSIKQIINVIQMKTAADVCVLYDIEKQHKKP</sequence>
<gene>
    <name type="primary">PIS2</name>
    <name type="ordered locus">At4g38570</name>
    <name type="ORF">F20M13.130</name>
</gene>
<reference key="1">
    <citation type="journal article" date="1999" name="Nature">
        <title>Sequence and analysis of chromosome 4 of the plant Arabidopsis thaliana.</title>
        <authorList>
            <person name="Mayer K.F.X."/>
            <person name="Schueller C."/>
            <person name="Wambutt R."/>
            <person name="Murphy G."/>
            <person name="Volckaert G."/>
            <person name="Pohl T."/>
            <person name="Duesterhoeft A."/>
            <person name="Stiekema W."/>
            <person name="Entian K.-D."/>
            <person name="Terryn N."/>
            <person name="Harris B."/>
            <person name="Ansorge W."/>
            <person name="Brandt P."/>
            <person name="Grivell L.A."/>
            <person name="Rieger M."/>
            <person name="Weichselgartner M."/>
            <person name="de Simone V."/>
            <person name="Obermaier B."/>
            <person name="Mache R."/>
            <person name="Mueller M."/>
            <person name="Kreis M."/>
            <person name="Delseny M."/>
            <person name="Puigdomenech P."/>
            <person name="Watson M."/>
            <person name="Schmidtheini T."/>
            <person name="Reichert B."/>
            <person name="Portetelle D."/>
            <person name="Perez-Alonso M."/>
            <person name="Boutry M."/>
            <person name="Bancroft I."/>
            <person name="Vos P."/>
            <person name="Hoheisel J."/>
            <person name="Zimmermann W."/>
            <person name="Wedler H."/>
            <person name="Ridley P."/>
            <person name="Langham S.-A."/>
            <person name="McCullagh B."/>
            <person name="Bilham L."/>
            <person name="Robben J."/>
            <person name="van der Schueren J."/>
            <person name="Grymonprez B."/>
            <person name="Chuang Y.-J."/>
            <person name="Vandenbussche F."/>
            <person name="Braeken M."/>
            <person name="Weltjens I."/>
            <person name="Voet M."/>
            <person name="Bastiaens I."/>
            <person name="Aert R."/>
            <person name="Defoor E."/>
            <person name="Weitzenegger T."/>
            <person name="Bothe G."/>
            <person name="Ramsperger U."/>
            <person name="Hilbert H."/>
            <person name="Braun M."/>
            <person name="Holzer E."/>
            <person name="Brandt A."/>
            <person name="Peters S."/>
            <person name="van Staveren M."/>
            <person name="Dirkse W."/>
            <person name="Mooijman P."/>
            <person name="Klein Lankhorst R."/>
            <person name="Rose M."/>
            <person name="Hauf J."/>
            <person name="Koetter P."/>
            <person name="Berneiser S."/>
            <person name="Hempel S."/>
            <person name="Feldpausch M."/>
            <person name="Lamberth S."/>
            <person name="Van den Daele H."/>
            <person name="De Keyser A."/>
            <person name="Buysshaert C."/>
            <person name="Gielen J."/>
            <person name="Villarroel R."/>
            <person name="De Clercq R."/>
            <person name="van Montagu M."/>
            <person name="Rogers J."/>
            <person name="Cronin A."/>
            <person name="Quail M.A."/>
            <person name="Bray-Allen S."/>
            <person name="Clark L."/>
            <person name="Doggett J."/>
            <person name="Hall S."/>
            <person name="Kay M."/>
            <person name="Lennard N."/>
            <person name="McLay K."/>
            <person name="Mayes R."/>
            <person name="Pettett A."/>
            <person name="Rajandream M.A."/>
            <person name="Lyne M."/>
            <person name="Benes V."/>
            <person name="Rechmann S."/>
            <person name="Borkova D."/>
            <person name="Bloecker H."/>
            <person name="Scharfe M."/>
            <person name="Grimm M."/>
            <person name="Loehnert T.-H."/>
            <person name="Dose S."/>
            <person name="de Haan M."/>
            <person name="Maarse A.C."/>
            <person name="Schaefer M."/>
            <person name="Mueller-Auer S."/>
            <person name="Gabel C."/>
            <person name="Fuchs M."/>
            <person name="Fartmann B."/>
            <person name="Granderath K."/>
            <person name="Dauner D."/>
            <person name="Herzl A."/>
            <person name="Neumann S."/>
            <person name="Argiriou A."/>
            <person name="Vitale D."/>
            <person name="Liguori R."/>
            <person name="Piravandi E."/>
            <person name="Massenet O."/>
            <person name="Quigley F."/>
            <person name="Clabauld G."/>
            <person name="Muendlein A."/>
            <person name="Felber R."/>
            <person name="Schnabl S."/>
            <person name="Hiller R."/>
            <person name="Schmidt W."/>
            <person name="Lecharny A."/>
            <person name="Aubourg S."/>
            <person name="Chefdor F."/>
            <person name="Cooke R."/>
            <person name="Berger C."/>
            <person name="Monfort A."/>
            <person name="Casacuberta E."/>
            <person name="Gibbons T."/>
            <person name="Weber N."/>
            <person name="Vandenbol M."/>
            <person name="Bargues M."/>
            <person name="Terol J."/>
            <person name="Torres A."/>
            <person name="Perez-Perez A."/>
            <person name="Purnelle B."/>
            <person name="Bent E."/>
            <person name="Johnson S."/>
            <person name="Tacon D."/>
            <person name="Jesse T."/>
            <person name="Heijnen L."/>
            <person name="Schwarz S."/>
            <person name="Scholler P."/>
            <person name="Heber S."/>
            <person name="Francs P."/>
            <person name="Bielke C."/>
            <person name="Frishman D."/>
            <person name="Haase D."/>
            <person name="Lemcke K."/>
            <person name="Mewes H.-W."/>
            <person name="Stocker S."/>
            <person name="Zaccaria P."/>
            <person name="Bevan M."/>
            <person name="Wilson R.K."/>
            <person name="de la Bastide M."/>
            <person name="Habermann K."/>
            <person name="Parnell L."/>
            <person name="Dedhia N."/>
            <person name="Gnoj L."/>
            <person name="Schutz K."/>
            <person name="Huang E."/>
            <person name="Spiegel L."/>
            <person name="Sekhon M."/>
            <person name="Murray J."/>
            <person name="Sheet P."/>
            <person name="Cordes M."/>
            <person name="Abu-Threideh J."/>
            <person name="Stoneking T."/>
            <person name="Kalicki J."/>
            <person name="Graves T."/>
            <person name="Harmon G."/>
            <person name="Edwards J."/>
            <person name="Latreille P."/>
            <person name="Courtney L."/>
            <person name="Cloud J."/>
            <person name="Abbott A."/>
            <person name="Scott K."/>
            <person name="Johnson D."/>
            <person name="Minx P."/>
            <person name="Bentley D."/>
            <person name="Fulton B."/>
            <person name="Miller N."/>
            <person name="Greco T."/>
            <person name="Kemp K."/>
            <person name="Kramer J."/>
            <person name="Fulton L."/>
            <person name="Mardis E."/>
            <person name="Dante M."/>
            <person name="Pepin K."/>
            <person name="Hillier L.W."/>
            <person name="Nelson J."/>
            <person name="Spieth J."/>
            <person name="Ryan E."/>
            <person name="Andrews S."/>
            <person name="Geisel C."/>
            <person name="Layman D."/>
            <person name="Du H."/>
            <person name="Ali J."/>
            <person name="Berghoff A."/>
            <person name="Jones K."/>
            <person name="Drone K."/>
            <person name="Cotton M."/>
            <person name="Joshu C."/>
            <person name="Antonoiu B."/>
            <person name="Zidanic M."/>
            <person name="Strong C."/>
            <person name="Sun H."/>
            <person name="Lamar B."/>
            <person name="Yordan C."/>
            <person name="Ma P."/>
            <person name="Zhong J."/>
            <person name="Preston R."/>
            <person name="Vil D."/>
            <person name="Shekher M."/>
            <person name="Matero A."/>
            <person name="Shah R."/>
            <person name="Swaby I.K."/>
            <person name="O'Shaughnessy A."/>
            <person name="Rodriguez M."/>
            <person name="Hoffman J."/>
            <person name="Till S."/>
            <person name="Granat S."/>
            <person name="Shohdy N."/>
            <person name="Hasegawa A."/>
            <person name="Hameed A."/>
            <person name="Lodhi M."/>
            <person name="Johnson A."/>
            <person name="Chen E."/>
            <person name="Marra M.A."/>
            <person name="Martienssen R."/>
            <person name="McCombie W.R."/>
        </authorList>
    </citation>
    <scope>NUCLEOTIDE SEQUENCE [LARGE SCALE GENOMIC DNA]</scope>
    <source>
        <strain>cv. Columbia</strain>
    </source>
</reference>
<reference key="2">
    <citation type="journal article" date="2017" name="Plant J.">
        <title>Araport11: a complete reannotation of the Arabidopsis thaliana reference genome.</title>
        <authorList>
            <person name="Cheng C.Y."/>
            <person name="Krishnakumar V."/>
            <person name="Chan A.P."/>
            <person name="Thibaud-Nissen F."/>
            <person name="Schobel S."/>
            <person name="Town C.D."/>
        </authorList>
    </citation>
    <scope>GENOME REANNOTATION</scope>
    <source>
        <strain>cv. Columbia</strain>
    </source>
</reference>
<reference key="3">
    <citation type="journal article" date="2003" name="Science">
        <title>Empirical analysis of transcriptional activity in the Arabidopsis genome.</title>
        <authorList>
            <person name="Yamada K."/>
            <person name="Lim J."/>
            <person name="Dale J.M."/>
            <person name="Chen H."/>
            <person name="Shinn P."/>
            <person name="Palm C.J."/>
            <person name="Southwick A.M."/>
            <person name="Wu H.C."/>
            <person name="Kim C.J."/>
            <person name="Nguyen M."/>
            <person name="Pham P.K."/>
            <person name="Cheuk R.F."/>
            <person name="Karlin-Newmann G."/>
            <person name="Liu S.X."/>
            <person name="Lam B."/>
            <person name="Sakano H."/>
            <person name="Wu T."/>
            <person name="Yu G."/>
            <person name="Miranda M."/>
            <person name="Quach H.L."/>
            <person name="Tripp M."/>
            <person name="Chang C.H."/>
            <person name="Lee J.M."/>
            <person name="Toriumi M.J."/>
            <person name="Chan M.M."/>
            <person name="Tang C.C."/>
            <person name="Onodera C.S."/>
            <person name="Deng J.M."/>
            <person name="Akiyama K."/>
            <person name="Ansari Y."/>
            <person name="Arakawa T."/>
            <person name="Banh J."/>
            <person name="Banno F."/>
            <person name="Bowser L."/>
            <person name="Brooks S.Y."/>
            <person name="Carninci P."/>
            <person name="Chao Q."/>
            <person name="Choy N."/>
            <person name="Enju A."/>
            <person name="Goldsmith A.D."/>
            <person name="Gurjal M."/>
            <person name="Hansen N.F."/>
            <person name="Hayashizaki Y."/>
            <person name="Johnson-Hopson C."/>
            <person name="Hsuan V.W."/>
            <person name="Iida K."/>
            <person name="Karnes M."/>
            <person name="Khan S."/>
            <person name="Koesema E."/>
            <person name="Ishida J."/>
            <person name="Jiang P.X."/>
            <person name="Jones T."/>
            <person name="Kawai J."/>
            <person name="Kamiya A."/>
            <person name="Meyers C."/>
            <person name="Nakajima M."/>
            <person name="Narusaka M."/>
            <person name="Seki M."/>
            <person name="Sakurai T."/>
            <person name="Satou M."/>
            <person name="Tamse R."/>
            <person name="Vaysberg M."/>
            <person name="Wallender E.K."/>
            <person name="Wong C."/>
            <person name="Yamamura Y."/>
            <person name="Yuan S."/>
            <person name="Shinozaki K."/>
            <person name="Davis R.W."/>
            <person name="Theologis A."/>
            <person name="Ecker J.R."/>
        </authorList>
    </citation>
    <scope>NUCLEOTIDE SEQUENCE [LARGE SCALE MRNA]</scope>
    <source>
        <strain>cv. Columbia</strain>
    </source>
</reference>
<reference key="4">
    <citation type="submission" date="2002-03" db="EMBL/GenBank/DDBJ databases">
        <title>Full-length cDNA from Arabidopsis thaliana.</title>
        <authorList>
            <person name="Brover V.V."/>
            <person name="Troukhan M.E."/>
            <person name="Alexandrov N.A."/>
            <person name="Lu Y.-P."/>
            <person name="Flavell R.B."/>
            <person name="Feldmann K.A."/>
        </authorList>
    </citation>
    <scope>NUCLEOTIDE SEQUENCE [LARGE SCALE MRNA]</scope>
</reference>
<protein>
    <recommendedName>
        <fullName>Probable CDP-diacylglycerol--inositol 3-phosphatidyltransferase 2</fullName>
        <ecNumber evidence="2">2.7.8.11</ecNumber>
    </recommendedName>
    <alternativeName>
        <fullName>Phosphatidylinositol synthase 2</fullName>
        <shortName>AtPIS2</shortName>
        <shortName>PI synthase 2</shortName>
        <shortName>PtdIns synthase 2</shortName>
    </alternativeName>
</protein>
<accession>Q8GUK6</accession>
<accession>Q9SZN6</accession>
<keyword id="KW-0025">Alternative splicing</keyword>
<keyword id="KW-0444">Lipid biosynthesis</keyword>
<keyword id="KW-0443">Lipid metabolism</keyword>
<keyword id="KW-0460">Magnesium</keyword>
<keyword id="KW-0464">Manganese</keyword>
<keyword id="KW-0472">Membrane</keyword>
<keyword id="KW-0479">Metal-binding</keyword>
<keyword id="KW-0594">Phospholipid biosynthesis</keyword>
<keyword id="KW-1208">Phospholipid metabolism</keyword>
<keyword id="KW-1185">Reference proteome</keyword>
<keyword id="KW-0808">Transferase</keyword>
<keyword id="KW-0812">Transmembrane</keyword>
<keyword id="KW-1133">Transmembrane helix</keyword>
<evidence type="ECO:0000250" key="1">
    <source>
        <dbReference type="UniProtKB" id="P9WPG7"/>
    </source>
</evidence>
<evidence type="ECO:0000250" key="2">
    <source>
        <dbReference type="UniProtKB" id="Q8LBA6"/>
    </source>
</evidence>
<evidence type="ECO:0000255" key="3"/>
<evidence type="ECO:0000305" key="4"/>
<comment type="function">
    <text evidence="2">Catalyzes the biosynthesis of phosphatidylinositol (PtdIns) as well as PtdIns:inositol exchange reaction. May thus act to reduce an excessive cellular PtdIns content. The exchange activity is due to the reverse reaction of PtdIns synthase and is dependent on CMP, which is tightly bound to the enzyme (By similarity).</text>
</comment>
<comment type="catalytic activity">
    <reaction evidence="2">
        <text>a CDP-1,2-diacyl-sn-glycerol + myo-inositol = a 1,2-diacyl-sn-glycero-3-phospho-(1D-myo-inositol) + CMP + H(+)</text>
        <dbReference type="Rhea" id="RHEA:11580"/>
        <dbReference type="ChEBI" id="CHEBI:15378"/>
        <dbReference type="ChEBI" id="CHEBI:17268"/>
        <dbReference type="ChEBI" id="CHEBI:57880"/>
        <dbReference type="ChEBI" id="CHEBI:58332"/>
        <dbReference type="ChEBI" id="CHEBI:60377"/>
        <dbReference type="EC" id="2.7.8.11"/>
    </reaction>
</comment>
<comment type="cofactor">
    <cofactor evidence="2">
        <name>Mg(2+)</name>
        <dbReference type="ChEBI" id="CHEBI:18420"/>
    </cofactor>
    <cofactor evidence="2">
        <name>Mn(2+)</name>
        <dbReference type="ChEBI" id="CHEBI:29035"/>
    </cofactor>
</comment>
<comment type="subcellular location">
    <subcellularLocation>
        <location evidence="3">Membrane</location>
        <topology evidence="3">Multi-pass membrane protein</topology>
    </subcellularLocation>
</comment>
<comment type="alternative products">
    <event type="alternative splicing"/>
    <isoform>
        <id>Q8GUK6-1</id>
        <name>1</name>
        <sequence type="displayed"/>
    </isoform>
    <text>A number of isoforms are produced. According to EST sequences.</text>
</comment>
<comment type="similarity">
    <text evidence="4">Belongs to the CDP-alcohol phosphatidyltransferase class-I family.</text>
</comment>